<feature type="chain" id="PRO_0000115117" description="DNA mismatch repair protein MutS">
    <location>
        <begin position="1"/>
        <end position="891"/>
    </location>
</feature>
<feature type="region of interest" description="Disordered" evidence="2">
    <location>
        <begin position="805"/>
        <end position="840"/>
    </location>
</feature>
<feature type="compositionally biased region" description="Basic and acidic residues" evidence="2">
    <location>
        <begin position="805"/>
        <end position="827"/>
    </location>
</feature>
<feature type="binding site" evidence="1">
    <location>
        <begin position="617"/>
        <end position="624"/>
    </location>
    <ligand>
        <name>ATP</name>
        <dbReference type="ChEBI" id="CHEBI:30616"/>
    </ligand>
</feature>
<name>MUTS_PORGI</name>
<comment type="function">
    <text evidence="1">This protein is involved in the repair of mismatches in DNA. It is possible that it carries out the mismatch recognition step. This protein has a weak ATPase activity.</text>
</comment>
<comment type="similarity">
    <text evidence="1">Belongs to the DNA mismatch repair MutS family.</text>
</comment>
<protein>
    <recommendedName>
        <fullName evidence="1">DNA mismatch repair protein MutS</fullName>
    </recommendedName>
</protein>
<evidence type="ECO:0000255" key="1">
    <source>
        <dbReference type="HAMAP-Rule" id="MF_00096"/>
    </source>
</evidence>
<evidence type="ECO:0000256" key="2">
    <source>
        <dbReference type="SAM" id="MobiDB-lite"/>
    </source>
</evidence>
<sequence>MAKPVVETPLMRQYFQIKQKHPDAILLFRVGDFYETFSEDAIVASEILGITLTRRANGAAQFVELAGFPHHALDTYLPKLVRAGKRVAICDQLEDPKKTKTLVKRGITELVTPGVSTNDNVLSHKENNFLAAVSCGKEVFGISLLDISTGEFMAGQGNADYVEKLLTNYRPKEILVERSERSRFNDLFHWSGFIFDMEDWAFSSENNRLRVLKHFDLKSLKGFGLEELSMAVTAAGAVLNYLDLTQHHQLQHITSLSRLDENRYVRLDKFTVRSLELLSPMNEGGKSLLDIIDHTITPMGARRIRQWIVFPLKDPARIQARQRVVEFFFRHPEERAIIAEHLTEIGDLERLVTKGAMGRISPREMVQLRVALQALEPIKEVCTHADEENLRTLGGKLELCKELRDKILREVMPDAPAALGRGPVIAHGVDATLDELRALAYSGKDYLIKLQQQEIERTGIPSLKVAYNNVFGYYIEVRNTHKDKVPAEWIRKQTLVSAERYITEELKEYEAKILGAEEKIAALEGQLYALLVAELQRYVAPLQQDSQAVASLDCLLSFAESARRYRFICPVVDESFTIDIKAGRHPVIEQQLPADEPYIANDIYLDTDRQQVIIVTGPNMSGKSALLRQTALISLMAQIGSFVPAESARIGMVDSIFTRVGASDNISMGESTFMVEMQEASNILNNLTPRSLVLFDELGRGTSTYDGISIAWSIVEYIHDNPKAHPRTLFATHYHELNELEGQLDRVHNFNVSAREVDGKMLFLRKLEPGGSAHSFGIQVARLGGMPHHIVQRATDILHRLEQEREKIEEEEPKTKDTKRGPSEKVKNASPTLPRDEKGRSIDGYQLSFFQLDDPVLSQIREEILDLNIDNLTPLEALNKLNDIKRILRGY</sequence>
<gene>
    <name evidence="1" type="primary">mutS</name>
    <name type="ordered locus">PG_0095</name>
</gene>
<accession>Q7MXR7</accession>
<reference key="1">
    <citation type="journal article" date="2003" name="J. Bacteriol.">
        <title>Complete genome sequence of the oral pathogenic bacterium Porphyromonas gingivalis strain W83.</title>
        <authorList>
            <person name="Nelson K.E."/>
            <person name="Fleischmann R.D."/>
            <person name="DeBoy R.T."/>
            <person name="Paulsen I.T."/>
            <person name="Fouts D.E."/>
            <person name="Eisen J.A."/>
            <person name="Daugherty S.C."/>
            <person name="Dodson R.J."/>
            <person name="Durkin A.S."/>
            <person name="Gwinn M.L."/>
            <person name="Haft D.H."/>
            <person name="Kolonay J.F."/>
            <person name="Nelson W.C."/>
            <person name="Mason T.M."/>
            <person name="Tallon L."/>
            <person name="Gray J."/>
            <person name="Granger D."/>
            <person name="Tettelin H."/>
            <person name="Dong H."/>
            <person name="Galvin J.L."/>
            <person name="Duncan M.J."/>
            <person name="Dewhirst F.E."/>
            <person name="Fraser C.M."/>
        </authorList>
    </citation>
    <scope>NUCLEOTIDE SEQUENCE [LARGE SCALE GENOMIC DNA]</scope>
    <source>
        <strain>ATCC BAA-308 / W83</strain>
    </source>
</reference>
<keyword id="KW-0067">ATP-binding</keyword>
<keyword id="KW-0227">DNA damage</keyword>
<keyword id="KW-0234">DNA repair</keyword>
<keyword id="KW-0238">DNA-binding</keyword>
<keyword id="KW-0547">Nucleotide-binding</keyword>
<keyword id="KW-1185">Reference proteome</keyword>
<proteinExistence type="inferred from homology"/>
<dbReference type="EMBL" id="AE015924">
    <property type="protein sequence ID" value="AAQ65342.1"/>
    <property type="molecule type" value="Genomic_DNA"/>
</dbReference>
<dbReference type="RefSeq" id="WP_005873956.1">
    <property type="nucleotide sequence ID" value="NC_002950.2"/>
</dbReference>
<dbReference type="SMR" id="Q7MXR7"/>
<dbReference type="STRING" id="242619.PG_0095"/>
<dbReference type="EnsemblBacteria" id="AAQ65342">
    <property type="protein sequence ID" value="AAQ65342"/>
    <property type="gene ID" value="PG_0095"/>
</dbReference>
<dbReference type="KEGG" id="pgi:PG_0095"/>
<dbReference type="PATRIC" id="fig|242619.8.peg.88"/>
<dbReference type="eggNOG" id="COG0249">
    <property type="taxonomic scope" value="Bacteria"/>
</dbReference>
<dbReference type="HOGENOM" id="CLU_002472_1_3_10"/>
<dbReference type="BioCyc" id="PGIN242619:G1G02-88-MONOMER"/>
<dbReference type="Proteomes" id="UP000000588">
    <property type="component" value="Chromosome"/>
</dbReference>
<dbReference type="GO" id="GO:0005829">
    <property type="term" value="C:cytosol"/>
    <property type="evidence" value="ECO:0007669"/>
    <property type="project" value="TreeGrafter"/>
</dbReference>
<dbReference type="GO" id="GO:0005524">
    <property type="term" value="F:ATP binding"/>
    <property type="evidence" value="ECO:0007669"/>
    <property type="project" value="UniProtKB-UniRule"/>
</dbReference>
<dbReference type="GO" id="GO:0140664">
    <property type="term" value="F:ATP-dependent DNA damage sensor activity"/>
    <property type="evidence" value="ECO:0007669"/>
    <property type="project" value="InterPro"/>
</dbReference>
<dbReference type="GO" id="GO:0003684">
    <property type="term" value="F:damaged DNA binding"/>
    <property type="evidence" value="ECO:0007669"/>
    <property type="project" value="UniProtKB-UniRule"/>
</dbReference>
<dbReference type="GO" id="GO:0030983">
    <property type="term" value="F:mismatched DNA binding"/>
    <property type="evidence" value="ECO:0007669"/>
    <property type="project" value="InterPro"/>
</dbReference>
<dbReference type="GO" id="GO:0006298">
    <property type="term" value="P:mismatch repair"/>
    <property type="evidence" value="ECO:0007669"/>
    <property type="project" value="UniProtKB-UniRule"/>
</dbReference>
<dbReference type="CDD" id="cd03284">
    <property type="entry name" value="ABC_MutS1"/>
    <property type="match status" value="1"/>
</dbReference>
<dbReference type="FunFam" id="3.40.1170.10:FF:000001">
    <property type="entry name" value="DNA mismatch repair protein MutS"/>
    <property type="match status" value="1"/>
</dbReference>
<dbReference type="FunFam" id="3.40.50.300:FF:000870">
    <property type="entry name" value="MutS protein homolog 4"/>
    <property type="match status" value="1"/>
</dbReference>
<dbReference type="Gene3D" id="1.10.1420.10">
    <property type="match status" value="2"/>
</dbReference>
<dbReference type="Gene3D" id="3.40.1170.10">
    <property type="entry name" value="DNA repair protein MutS, domain I"/>
    <property type="match status" value="1"/>
</dbReference>
<dbReference type="Gene3D" id="3.30.420.110">
    <property type="entry name" value="MutS, connector domain"/>
    <property type="match status" value="1"/>
</dbReference>
<dbReference type="Gene3D" id="3.40.50.300">
    <property type="entry name" value="P-loop containing nucleotide triphosphate hydrolases"/>
    <property type="match status" value="1"/>
</dbReference>
<dbReference type="HAMAP" id="MF_00096">
    <property type="entry name" value="MutS"/>
    <property type="match status" value="1"/>
</dbReference>
<dbReference type="InterPro" id="IPR005748">
    <property type="entry name" value="DNA_mismatch_repair_MutS"/>
</dbReference>
<dbReference type="InterPro" id="IPR007695">
    <property type="entry name" value="DNA_mismatch_repair_MutS-lik_N"/>
</dbReference>
<dbReference type="InterPro" id="IPR017261">
    <property type="entry name" value="DNA_mismatch_repair_MutS/MSH"/>
</dbReference>
<dbReference type="InterPro" id="IPR000432">
    <property type="entry name" value="DNA_mismatch_repair_MutS_C"/>
</dbReference>
<dbReference type="InterPro" id="IPR007861">
    <property type="entry name" value="DNA_mismatch_repair_MutS_clamp"/>
</dbReference>
<dbReference type="InterPro" id="IPR007696">
    <property type="entry name" value="DNA_mismatch_repair_MutS_core"/>
</dbReference>
<dbReference type="InterPro" id="IPR016151">
    <property type="entry name" value="DNA_mismatch_repair_MutS_N"/>
</dbReference>
<dbReference type="InterPro" id="IPR036187">
    <property type="entry name" value="DNA_mismatch_repair_MutS_sf"/>
</dbReference>
<dbReference type="InterPro" id="IPR007860">
    <property type="entry name" value="DNA_mmatch_repair_MutS_con_dom"/>
</dbReference>
<dbReference type="InterPro" id="IPR045076">
    <property type="entry name" value="MutS"/>
</dbReference>
<dbReference type="InterPro" id="IPR036678">
    <property type="entry name" value="MutS_con_dom_sf"/>
</dbReference>
<dbReference type="InterPro" id="IPR027417">
    <property type="entry name" value="P-loop_NTPase"/>
</dbReference>
<dbReference type="NCBIfam" id="TIGR01070">
    <property type="entry name" value="mutS1"/>
    <property type="match status" value="1"/>
</dbReference>
<dbReference type="NCBIfam" id="NF003810">
    <property type="entry name" value="PRK05399.1"/>
    <property type="match status" value="1"/>
</dbReference>
<dbReference type="PANTHER" id="PTHR11361:SF34">
    <property type="entry name" value="DNA MISMATCH REPAIR PROTEIN MSH1, MITOCHONDRIAL"/>
    <property type="match status" value="1"/>
</dbReference>
<dbReference type="PANTHER" id="PTHR11361">
    <property type="entry name" value="DNA MISMATCH REPAIR PROTEIN MUTS FAMILY MEMBER"/>
    <property type="match status" value="1"/>
</dbReference>
<dbReference type="Pfam" id="PF01624">
    <property type="entry name" value="MutS_I"/>
    <property type="match status" value="1"/>
</dbReference>
<dbReference type="Pfam" id="PF05188">
    <property type="entry name" value="MutS_II"/>
    <property type="match status" value="1"/>
</dbReference>
<dbReference type="Pfam" id="PF05192">
    <property type="entry name" value="MutS_III"/>
    <property type="match status" value="1"/>
</dbReference>
<dbReference type="Pfam" id="PF05190">
    <property type="entry name" value="MutS_IV"/>
    <property type="match status" value="1"/>
</dbReference>
<dbReference type="Pfam" id="PF00488">
    <property type="entry name" value="MutS_V"/>
    <property type="match status" value="1"/>
</dbReference>
<dbReference type="PIRSF" id="PIRSF037677">
    <property type="entry name" value="DNA_mis_repair_Msh6"/>
    <property type="match status" value="1"/>
</dbReference>
<dbReference type="SMART" id="SM00534">
    <property type="entry name" value="MUTSac"/>
    <property type="match status" value="1"/>
</dbReference>
<dbReference type="SMART" id="SM00533">
    <property type="entry name" value="MUTSd"/>
    <property type="match status" value="1"/>
</dbReference>
<dbReference type="SUPFAM" id="SSF55271">
    <property type="entry name" value="DNA repair protein MutS, domain I"/>
    <property type="match status" value="1"/>
</dbReference>
<dbReference type="SUPFAM" id="SSF53150">
    <property type="entry name" value="DNA repair protein MutS, domain II"/>
    <property type="match status" value="1"/>
</dbReference>
<dbReference type="SUPFAM" id="SSF48334">
    <property type="entry name" value="DNA repair protein MutS, domain III"/>
    <property type="match status" value="1"/>
</dbReference>
<dbReference type="SUPFAM" id="SSF52540">
    <property type="entry name" value="P-loop containing nucleoside triphosphate hydrolases"/>
    <property type="match status" value="1"/>
</dbReference>
<dbReference type="PROSITE" id="PS00486">
    <property type="entry name" value="DNA_MISMATCH_REPAIR_2"/>
    <property type="match status" value="1"/>
</dbReference>
<organism>
    <name type="scientific">Porphyromonas gingivalis (strain ATCC BAA-308 / W83)</name>
    <dbReference type="NCBI Taxonomy" id="242619"/>
    <lineage>
        <taxon>Bacteria</taxon>
        <taxon>Pseudomonadati</taxon>
        <taxon>Bacteroidota</taxon>
        <taxon>Bacteroidia</taxon>
        <taxon>Bacteroidales</taxon>
        <taxon>Porphyromonadaceae</taxon>
        <taxon>Porphyromonas</taxon>
    </lineage>
</organism>